<accession>Q8EFT6</accession>
<comment type="function">
    <text evidence="1">Part of the outer membrane protein assembly complex, which is involved in assembly and insertion of beta-barrel proteins into the outer membrane.</text>
</comment>
<comment type="subunit">
    <text evidence="1">Part of the Bam complex.</text>
</comment>
<comment type="subcellular location">
    <subcellularLocation>
        <location evidence="1">Cell outer membrane</location>
        <topology evidence="1">Lipid-anchor</topology>
    </subcellularLocation>
</comment>
<comment type="similarity">
    <text evidence="1">Belongs to the BamC family.</text>
</comment>
<sequence>MLKKVTPLFLVAAVAACSSPLERRQANGGEDYVQAEQAPMLKIPEGLKTPPYNKEYDVPALGPKANPALVGKNLDIRPPLQVLPMAEGTHVEEGSDNIKIVVESIDNNVDLKQEIFTNLDDFFAKQAIPIRSRDFDKGSIETDWIESREVLESSLWGSDKEYLLRQRYRFDVETRPHGRTANIVIHLVEHEEFYDGKEQKVMLSGEDKQRYTIDMLNSAIAYMSVKREQTIQANRLKQTLGINVDLITPEEGAAYWSAKAAYKQVWDRLRIVLPEMGFEISDMDSAKGLYFIKFTDNSGFWSSLWNNNQLSLKEGSYRLLLEDGDTPDETKIWLRDAEDQPLSNDVVSKVYESLSSLMKEERKLR</sequence>
<evidence type="ECO:0000255" key="1">
    <source>
        <dbReference type="HAMAP-Rule" id="MF_00924"/>
    </source>
</evidence>
<feature type="signal peptide" evidence="1">
    <location>
        <begin position="1"/>
        <end position="16"/>
    </location>
</feature>
<feature type="chain" id="PRO_0000417823" description="Outer membrane protein assembly factor BamC">
    <location>
        <begin position="17"/>
        <end position="365"/>
    </location>
</feature>
<feature type="lipid moiety-binding region" description="N-palmitoyl cysteine" evidence="1">
    <location>
        <position position="17"/>
    </location>
</feature>
<feature type="lipid moiety-binding region" description="S-diacylglycerol cysteine" evidence="1">
    <location>
        <position position="17"/>
    </location>
</feature>
<protein>
    <recommendedName>
        <fullName evidence="1">Outer membrane protein assembly factor BamC</fullName>
    </recommendedName>
</protein>
<reference key="1">
    <citation type="journal article" date="2002" name="Nat. Biotechnol.">
        <title>Genome sequence of the dissimilatory metal ion-reducing bacterium Shewanella oneidensis.</title>
        <authorList>
            <person name="Heidelberg J.F."/>
            <person name="Paulsen I.T."/>
            <person name="Nelson K.E."/>
            <person name="Gaidos E.J."/>
            <person name="Nelson W.C."/>
            <person name="Read T.D."/>
            <person name="Eisen J.A."/>
            <person name="Seshadri R."/>
            <person name="Ward N.L."/>
            <person name="Methe B.A."/>
            <person name="Clayton R.A."/>
            <person name="Meyer T."/>
            <person name="Tsapin A."/>
            <person name="Scott J."/>
            <person name="Beanan M.J."/>
            <person name="Brinkac L.M."/>
            <person name="Daugherty S.C."/>
            <person name="DeBoy R.T."/>
            <person name="Dodson R.J."/>
            <person name="Durkin A.S."/>
            <person name="Haft D.H."/>
            <person name="Kolonay J.F."/>
            <person name="Madupu R."/>
            <person name="Peterson J.D."/>
            <person name="Umayam L.A."/>
            <person name="White O."/>
            <person name="Wolf A.M."/>
            <person name="Vamathevan J.J."/>
            <person name="Weidman J.F."/>
            <person name="Impraim M."/>
            <person name="Lee K."/>
            <person name="Berry K.J."/>
            <person name="Lee C."/>
            <person name="Mueller J."/>
            <person name="Khouri H.M."/>
            <person name="Gill J."/>
            <person name="Utterback T.R."/>
            <person name="McDonald L.A."/>
            <person name="Feldblyum T.V."/>
            <person name="Smith H.O."/>
            <person name="Venter J.C."/>
            <person name="Nealson K.H."/>
            <person name="Fraser C.M."/>
        </authorList>
    </citation>
    <scope>NUCLEOTIDE SEQUENCE [LARGE SCALE GENOMIC DNA]</scope>
    <source>
        <strain>ATCC 700550 / JCM 31522 / CIP 106686 / LMG 19005 / NCIMB 14063 / MR-1</strain>
    </source>
</reference>
<name>BAMC_SHEON</name>
<organism>
    <name type="scientific">Shewanella oneidensis (strain ATCC 700550 / JCM 31522 / CIP 106686 / LMG 19005 / NCIMB 14063 / MR-1)</name>
    <dbReference type="NCBI Taxonomy" id="211586"/>
    <lineage>
        <taxon>Bacteria</taxon>
        <taxon>Pseudomonadati</taxon>
        <taxon>Pseudomonadota</taxon>
        <taxon>Gammaproteobacteria</taxon>
        <taxon>Alteromonadales</taxon>
        <taxon>Shewanellaceae</taxon>
        <taxon>Shewanella</taxon>
    </lineage>
</organism>
<dbReference type="EMBL" id="AE014299">
    <property type="protein sequence ID" value="AAN54932.1"/>
    <property type="molecule type" value="Genomic_DNA"/>
</dbReference>
<dbReference type="RefSeq" id="NP_717488.1">
    <property type="nucleotide sequence ID" value="NC_004347.2"/>
</dbReference>
<dbReference type="RefSeq" id="WP_011071989.1">
    <property type="nucleotide sequence ID" value="NC_004347.2"/>
</dbReference>
<dbReference type="SMR" id="Q8EFT6"/>
<dbReference type="STRING" id="211586.SO_1880"/>
<dbReference type="PaxDb" id="211586-SO_1880"/>
<dbReference type="DNASU" id="1169646"/>
<dbReference type="KEGG" id="son:SO_1880"/>
<dbReference type="PATRIC" id="fig|211586.12.peg.1807"/>
<dbReference type="eggNOG" id="COG3317">
    <property type="taxonomic scope" value="Bacteria"/>
</dbReference>
<dbReference type="HOGENOM" id="CLU_063217_0_0_6"/>
<dbReference type="OrthoDB" id="5598420at2"/>
<dbReference type="PhylomeDB" id="Q8EFT6"/>
<dbReference type="BioCyc" id="SONE211586:G1GMP-1735-MONOMER"/>
<dbReference type="Proteomes" id="UP000008186">
    <property type="component" value="Chromosome"/>
</dbReference>
<dbReference type="GO" id="GO:0009279">
    <property type="term" value="C:cell outer membrane"/>
    <property type="evidence" value="ECO:0007669"/>
    <property type="project" value="UniProtKB-SubCell"/>
</dbReference>
<dbReference type="GO" id="GO:0043165">
    <property type="term" value="P:Gram-negative-bacterium-type cell outer membrane assembly"/>
    <property type="evidence" value="ECO:0007669"/>
    <property type="project" value="UniProtKB-UniRule"/>
</dbReference>
<dbReference type="GO" id="GO:0051205">
    <property type="term" value="P:protein insertion into membrane"/>
    <property type="evidence" value="ECO:0007669"/>
    <property type="project" value="UniProtKB-UniRule"/>
</dbReference>
<dbReference type="Gene3D" id="3.30.530.50">
    <property type="match status" value="1"/>
</dbReference>
<dbReference type="Gene3D" id="3.30.310.170">
    <property type="entry name" value="Outer membrane protein assembly factor BamC"/>
    <property type="match status" value="1"/>
</dbReference>
<dbReference type="HAMAP" id="MF_00924">
    <property type="entry name" value="OM_assembly_BamC"/>
    <property type="match status" value="1"/>
</dbReference>
<dbReference type="InterPro" id="IPR014524">
    <property type="entry name" value="BamC"/>
</dbReference>
<dbReference type="InterPro" id="IPR042268">
    <property type="entry name" value="BamC_C"/>
</dbReference>
<dbReference type="InterPro" id="IPR010653">
    <property type="entry name" value="NlpB/DapX"/>
</dbReference>
<dbReference type="Pfam" id="PF06804">
    <property type="entry name" value="Lipoprotein_18"/>
    <property type="match status" value="1"/>
</dbReference>
<dbReference type="PIRSF" id="PIRSF026343">
    <property type="entry name" value="NlpB"/>
    <property type="match status" value="1"/>
</dbReference>
<dbReference type="PROSITE" id="PS51257">
    <property type="entry name" value="PROKAR_LIPOPROTEIN"/>
    <property type="match status" value="1"/>
</dbReference>
<proteinExistence type="inferred from homology"/>
<gene>
    <name evidence="1" type="primary">bamC</name>
    <name type="synonym">nlpB</name>
    <name type="ordered locus">SO_1880</name>
</gene>
<keyword id="KW-0998">Cell outer membrane</keyword>
<keyword id="KW-0449">Lipoprotein</keyword>
<keyword id="KW-0472">Membrane</keyword>
<keyword id="KW-0564">Palmitate</keyword>
<keyword id="KW-1185">Reference proteome</keyword>
<keyword id="KW-0732">Signal</keyword>